<gene>
    <name evidence="1" type="primary">trmD</name>
    <name type="ordered locus">Bcep1808_0991</name>
</gene>
<proteinExistence type="inferred from homology"/>
<name>TRMD_BURVG</name>
<accession>A4JCJ9</accession>
<feature type="chain" id="PRO_1000006462" description="tRNA (guanine-N(1)-)-methyltransferase">
    <location>
        <begin position="1"/>
        <end position="264"/>
    </location>
</feature>
<feature type="binding site" evidence="1">
    <location>
        <position position="125"/>
    </location>
    <ligand>
        <name>S-adenosyl-L-methionine</name>
        <dbReference type="ChEBI" id="CHEBI:59789"/>
    </ligand>
</feature>
<feature type="binding site" evidence="1">
    <location>
        <begin position="145"/>
        <end position="150"/>
    </location>
    <ligand>
        <name>S-adenosyl-L-methionine</name>
        <dbReference type="ChEBI" id="CHEBI:59789"/>
    </ligand>
</feature>
<protein>
    <recommendedName>
        <fullName evidence="1">tRNA (guanine-N(1)-)-methyltransferase</fullName>
        <ecNumber evidence="1">2.1.1.228</ecNumber>
    </recommendedName>
    <alternativeName>
        <fullName evidence="1">M1G-methyltransferase</fullName>
    </alternativeName>
    <alternativeName>
        <fullName evidence="1">tRNA [GM37] methyltransferase</fullName>
    </alternativeName>
</protein>
<keyword id="KW-0963">Cytoplasm</keyword>
<keyword id="KW-0489">Methyltransferase</keyword>
<keyword id="KW-0949">S-adenosyl-L-methionine</keyword>
<keyword id="KW-0808">Transferase</keyword>
<keyword id="KW-0819">tRNA processing</keyword>
<reference key="1">
    <citation type="submission" date="2007-03" db="EMBL/GenBank/DDBJ databases">
        <title>Complete sequence of chromosome 1 of Burkholderia vietnamiensis G4.</title>
        <authorList>
            <consortium name="US DOE Joint Genome Institute"/>
            <person name="Copeland A."/>
            <person name="Lucas S."/>
            <person name="Lapidus A."/>
            <person name="Barry K."/>
            <person name="Detter J.C."/>
            <person name="Glavina del Rio T."/>
            <person name="Hammon N."/>
            <person name="Israni S."/>
            <person name="Dalin E."/>
            <person name="Tice H."/>
            <person name="Pitluck S."/>
            <person name="Chain P."/>
            <person name="Malfatti S."/>
            <person name="Shin M."/>
            <person name="Vergez L."/>
            <person name="Schmutz J."/>
            <person name="Larimer F."/>
            <person name="Land M."/>
            <person name="Hauser L."/>
            <person name="Kyrpides N."/>
            <person name="Tiedje J."/>
            <person name="Richardson P."/>
        </authorList>
    </citation>
    <scope>NUCLEOTIDE SEQUENCE [LARGE SCALE GENOMIC DNA]</scope>
    <source>
        <strain>G4 / LMG 22486</strain>
    </source>
</reference>
<evidence type="ECO:0000255" key="1">
    <source>
        <dbReference type="HAMAP-Rule" id="MF_00605"/>
    </source>
</evidence>
<organism>
    <name type="scientific">Burkholderia vietnamiensis (strain G4 / LMG 22486)</name>
    <name type="common">Burkholderia cepacia (strain R1808)</name>
    <dbReference type="NCBI Taxonomy" id="269482"/>
    <lineage>
        <taxon>Bacteria</taxon>
        <taxon>Pseudomonadati</taxon>
        <taxon>Pseudomonadota</taxon>
        <taxon>Betaproteobacteria</taxon>
        <taxon>Burkholderiales</taxon>
        <taxon>Burkholderiaceae</taxon>
        <taxon>Burkholderia</taxon>
        <taxon>Burkholderia cepacia complex</taxon>
    </lineage>
</organism>
<sequence>MNQATERAVQFDVVTLFPEMFRALTDWGITSRAVKQERFGLRTWNPRDFTTDNYRTIDDRPYGGGPGMVMLAKPLEAAIGAAKAAQAEQGIASTRVVMMSPQGAPFTHERAVRMAQEPGVVVLCGRYEAIDQRLLDRCVDEEISLGDFVLSGGELPAMAMMDAVVRLLPGVLNDAQSAVQDSFVDGLLDCPHYTRPEEYEGMRVPDVLLGGHHAEIEKWRRQEALRNTLRKRPDLIVRARREKLLSRADEAWLANLAREAKNAS</sequence>
<dbReference type="EC" id="2.1.1.228" evidence="1"/>
<dbReference type="EMBL" id="CP000614">
    <property type="protein sequence ID" value="ABO54002.1"/>
    <property type="molecule type" value="Genomic_DNA"/>
</dbReference>
<dbReference type="SMR" id="A4JCJ9"/>
<dbReference type="KEGG" id="bvi:Bcep1808_0991"/>
<dbReference type="eggNOG" id="COG0336">
    <property type="taxonomic scope" value="Bacteria"/>
</dbReference>
<dbReference type="HOGENOM" id="CLU_047363_0_2_4"/>
<dbReference type="Proteomes" id="UP000002287">
    <property type="component" value="Chromosome 1"/>
</dbReference>
<dbReference type="GO" id="GO:0005829">
    <property type="term" value="C:cytosol"/>
    <property type="evidence" value="ECO:0007669"/>
    <property type="project" value="TreeGrafter"/>
</dbReference>
<dbReference type="GO" id="GO:0052906">
    <property type="term" value="F:tRNA (guanine(37)-N1)-methyltransferase activity"/>
    <property type="evidence" value="ECO:0007669"/>
    <property type="project" value="UniProtKB-UniRule"/>
</dbReference>
<dbReference type="GO" id="GO:0002939">
    <property type="term" value="P:tRNA N1-guanine methylation"/>
    <property type="evidence" value="ECO:0007669"/>
    <property type="project" value="TreeGrafter"/>
</dbReference>
<dbReference type="CDD" id="cd18080">
    <property type="entry name" value="TrmD-like"/>
    <property type="match status" value="1"/>
</dbReference>
<dbReference type="FunFam" id="1.10.1270.20:FF:000001">
    <property type="entry name" value="tRNA (guanine-N(1)-)-methyltransferase"/>
    <property type="match status" value="1"/>
</dbReference>
<dbReference type="FunFam" id="3.40.1280.10:FF:000001">
    <property type="entry name" value="tRNA (guanine-N(1)-)-methyltransferase"/>
    <property type="match status" value="1"/>
</dbReference>
<dbReference type="Gene3D" id="3.40.1280.10">
    <property type="match status" value="1"/>
</dbReference>
<dbReference type="Gene3D" id="1.10.1270.20">
    <property type="entry name" value="tRNA(m1g37)methyltransferase, domain 2"/>
    <property type="match status" value="1"/>
</dbReference>
<dbReference type="HAMAP" id="MF_00605">
    <property type="entry name" value="TrmD"/>
    <property type="match status" value="1"/>
</dbReference>
<dbReference type="InterPro" id="IPR029028">
    <property type="entry name" value="Alpha/beta_knot_MTases"/>
</dbReference>
<dbReference type="InterPro" id="IPR023148">
    <property type="entry name" value="tRNA_m1G_MeTrfase_C_sf"/>
</dbReference>
<dbReference type="InterPro" id="IPR002649">
    <property type="entry name" value="tRNA_m1G_MeTrfase_TrmD"/>
</dbReference>
<dbReference type="InterPro" id="IPR029026">
    <property type="entry name" value="tRNA_m1G_MTases_N"/>
</dbReference>
<dbReference type="InterPro" id="IPR016009">
    <property type="entry name" value="tRNA_MeTrfase_TRMD/TRM10"/>
</dbReference>
<dbReference type="NCBIfam" id="NF000648">
    <property type="entry name" value="PRK00026.1"/>
    <property type="match status" value="1"/>
</dbReference>
<dbReference type="NCBIfam" id="TIGR00088">
    <property type="entry name" value="trmD"/>
    <property type="match status" value="1"/>
</dbReference>
<dbReference type="PANTHER" id="PTHR46417">
    <property type="entry name" value="TRNA (GUANINE-N(1)-)-METHYLTRANSFERASE"/>
    <property type="match status" value="1"/>
</dbReference>
<dbReference type="PANTHER" id="PTHR46417:SF1">
    <property type="entry name" value="TRNA (GUANINE-N(1)-)-METHYLTRANSFERASE"/>
    <property type="match status" value="1"/>
</dbReference>
<dbReference type="Pfam" id="PF01746">
    <property type="entry name" value="tRNA_m1G_MT"/>
    <property type="match status" value="1"/>
</dbReference>
<dbReference type="PIRSF" id="PIRSF000386">
    <property type="entry name" value="tRNA_mtase"/>
    <property type="match status" value="1"/>
</dbReference>
<dbReference type="SUPFAM" id="SSF75217">
    <property type="entry name" value="alpha/beta knot"/>
    <property type="match status" value="1"/>
</dbReference>
<comment type="function">
    <text evidence="1">Specifically methylates guanosine-37 in various tRNAs.</text>
</comment>
<comment type="catalytic activity">
    <reaction evidence="1">
        <text>guanosine(37) in tRNA + S-adenosyl-L-methionine = N(1)-methylguanosine(37) in tRNA + S-adenosyl-L-homocysteine + H(+)</text>
        <dbReference type="Rhea" id="RHEA:36899"/>
        <dbReference type="Rhea" id="RHEA-COMP:10145"/>
        <dbReference type="Rhea" id="RHEA-COMP:10147"/>
        <dbReference type="ChEBI" id="CHEBI:15378"/>
        <dbReference type="ChEBI" id="CHEBI:57856"/>
        <dbReference type="ChEBI" id="CHEBI:59789"/>
        <dbReference type="ChEBI" id="CHEBI:73542"/>
        <dbReference type="ChEBI" id="CHEBI:74269"/>
        <dbReference type="EC" id="2.1.1.228"/>
    </reaction>
</comment>
<comment type="subunit">
    <text evidence="1">Homodimer.</text>
</comment>
<comment type="subcellular location">
    <subcellularLocation>
        <location evidence="1">Cytoplasm</location>
    </subcellularLocation>
</comment>
<comment type="similarity">
    <text evidence="1">Belongs to the RNA methyltransferase TrmD family.</text>
</comment>